<dbReference type="EMBL" id="AL590842">
    <property type="protein sequence ID" value="CAL20055.1"/>
    <property type="molecule type" value="Genomic_DNA"/>
</dbReference>
<dbReference type="EMBL" id="AE009952">
    <property type="protein sequence ID" value="AAM86319.1"/>
    <property type="molecule type" value="Genomic_DNA"/>
</dbReference>
<dbReference type="EMBL" id="AE017042">
    <property type="protein sequence ID" value="AAS61433.1"/>
    <property type="molecule type" value="Genomic_DNA"/>
</dbReference>
<dbReference type="PIR" id="AE0171">
    <property type="entry name" value="AE0171"/>
</dbReference>
<dbReference type="RefSeq" id="WP_002211310.1">
    <property type="nucleotide sequence ID" value="NZ_WUCM01000045.1"/>
</dbReference>
<dbReference type="RefSeq" id="YP_002346426.1">
    <property type="nucleotide sequence ID" value="NC_003143.1"/>
</dbReference>
<dbReference type="SMR" id="Q8ZGA1"/>
<dbReference type="IntAct" id="Q8ZGA1">
    <property type="interactions" value="6"/>
</dbReference>
<dbReference type="STRING" id="214092.YPO1403"/>
<dbReference type="PaxDb" id="214092-YPO1403"/>
<dbReference type="DNASU" id="1147714"/>
<dbReference type="EnsemblBacteria" id="AAS61433">
    <property type="protein sequence ID" value="AAS61433"/>
    <property type="gene ID" value="YP_1190"/>
</dbReference>
<dbReference type="GeneID" id="57977199"/>
<dbReference type="KEGG" id="ype:YPO1403"/>
<dbReference type="KEGG" id="ypk:y2767"/>
<dbReference type="KEGG" id="ypm:YP_1190"/>
<dbReference type="PATRIC" id="fig|214092.21.peg.1728"/>
<dbReference type="eggNOG" id="COG3006">
    <property type="taxonomic scope" value="Bacteria"/>
</dbReference>
<dbReference type="HOGENOM" id="CLU_049853_0_0_6"/>
<dbReference type="OMA" id="TKDWQAA"/>
<dbReference type="OrthoDB" id="6450805at2"/>
<dbReference type="Proteomes" id="UP000000815">
    <property type="component" value="Chromosome"/>
</dbReference>
<dbReference type="Proteomes" id="UP000001019">
    <property type="component" value="Chromosome"/>
</dbReference>
<dbReference type="Proteomes" id="UP000002490">
    <property type="component" value="Chromosome"/>
</dbReference>
<dbReference type="GO" id="GO:0005737">
    <property type="term" value="C:cytoplasm"/>
    <property type="evidence" value="ECO:0007669"/>
    <property type="project" value="UniProtKB-UniRule"/>
</dbReference>
<dbReference type="GO" id="GO:0009295">
    <property type="term" value="C:nucleoid"/>
    <property type="evidence" value="ECO:0007669"/>
    <property type="project" value="UniProtKB-SubCell"/>
</dbReference>
<dbReference type="GO" id="GO:0005509">
    <property type="term" value="F:calcium ion binding"/>
    <property type="evidence" value="ECO:0007669"/>
    <property type="project" value="UniProtKB-UniRule"/>
</dbReference>
<dbReference type="GO" id="GO:0051301">
    <property type="term" value="P:cell division"/>
    <property type="evidence" value="ECO:0007669"/>
    <property type="project" value="UniProtKB-KW"/>
</dbReference>
<dbReference type="GO" id="GO:0030261">
    <property type="term" value="P:chromosome condensation"/>
    <property type="evidence" value="ECO:0007669"/>
    <property type="project" value="UniProtKB-KW"/>
</dbReference>
<dbReference type="GO" id="GO:0007059">
    <property type="term" value="P:chromosome segregation"/>
    <property type="evidence" value="ECO:0007669"/>
    <property type="project" value="UniProtKB-UniRule"/>
</dbReference>
<dbReference type="GO" id="GO:0006260">
    <property type="term" value="P:DNA replication"/>
    <property type="evidence" value="ECO:0007669"/>
    <property type="project" value="UniProtKB-UniRule"/>
</dbReference>
<dbReference type="CDD" id="cd16337">
    <property type="entry name" value="MukF_C"/>
    <property type="match status" value="1"/>
</dbReference>
<dbReference type="CDD" id="cd16335">
    <property type="entry name" value="MukF_N"/>
    <property type="match status" value="1"/>
</dbReference>
<dbReference type="Gene3D" id="1.20.58.590">
    <property type="entry name" value="Chromosome partition protein MukF, middle domain"/>
    <property type="match status" value="1"/>
</dbReference>
<dbReference type="Gene3D" id="1.10.225.40">
    <property type="entry name" value="MukF, C-terminal domain"/>
    <property type="match status" value="1"/>
</dbReference>
<dbReference type="Gene3D" id="1.10.10.10">
    <property type="entry name" value="Winged helix-like DNA-binding domain superfamily/Winged helix DNA-binding domain"/>
    <property type="match status" value="1"/>
</dbReference>
<dbReference type="HAMAP" id="MF_01803">
    <property type="entry name" value="MukF"/>
    <property type="match status" value="1"/>
</dbReference>
<dbReference type="InterPro" id="IPR005582">
    <property type="entry name" value="Chromosome_partition_MukF"/>
</dbReference>
<dbReference type="InterPro" id="IPR033441">
    <property type="entry name" value="MukF_C"/>
</dbReference>
<dbReference type="InterPro" id="IPR038198">
    <property type="entry name" value="MukF_C_sf"/>
</dbReference>
<dbReference type="InterPro" id="IPR033440">
    <property type="entry name" value="MukF_M"/>
</dbReference>
<dbReference type="InterPro" id="IPR036141">
    <property type="entry name" value="MukF_M_sp"/>
</dbReference>
<dbReference type="InterPro" id="IPR033439">
    <property type="entry name" value="MukF_WHTH"/>
</dbReference>
<dbReference type="InterPro" id="IPR010916">
    <property type="entry name" value="TonB_box_CS"/>
</dbReference>
<dbReference type="InterPro" id="IPR036388">
    <property type="entry name" value="WH-like_DNA-bd_sf"/>
</dbReference>
<dbReference type="InterPro" id="IPR036390">
    <property type="entry name" value="WH_DNA-bd_sf"/>
</dbReference>
<dbReference type="NCBIfam" id="NF003615">
    <property type="entry name" value="PRK05260.1"/>
    <property type="match status" value="1"/>
</dbReference>
<dbReference type="Pfam" id="PF03882">
    <property type="entry name" value="KicB"/>
    <property type="match status" value="1"/>
</dbReference>
<dbReference type="Pfam" id="PF17193">
    <property type="entry name" value="MukF_C"/>
    <property type="match status" value="1"/>
</dbReference>
<dbReference type="Pfam" id="PF17192">
    <property type="entry name" value="MukF_M"/>
    <property type="match status" value="1"/>
</dbReference>
<dbReference type="PIRSF" id="PIRSF018282">
    <property type="entry name" value="MukF"/>
    <property type="match status" value="1"/>
</dbReference>
<dbReference type="SUPFAM" id="SSF140570">
    <property type="entry name" value="MukF C-terminal domain-like"/>
    <property type="match status" value="1"/>
</dbReference>
<dbReference type="SUPFAM" id="SSF46785">
    <property type="entry name" value="Winged helix' DNA-binding domain"/>
    <property type="match status" value="1"/>
</dbReference>
<keyword id="KW-0106">Calcium</keyword>
<keyword id="KW-0131">Cell cycle</keyword>
<keyword id="KW-0132">Cell division</keyword>
<keyword id="KW-0159">Chromosome partition</keyword>
<keyword id="KW-0963">Cytoplasm</keyword>
<keyword id="KW-0226">DNA condensation</keyword>
<keyword id="KW-1185">Reference proteome</keyword>
<comment type="function">
    <text evidence="1">Involved in chromosome condensation, segregation and cell cycle progression. May participate in facilitating chromosome segregation by condensation DNA from both sides of a centrally located replisome during cell division. Not required for mini-F plasmid partitioning. Probably acts via its interaction with MukB and MukE. Overexpression results in anucleate cells. It has a calcium binding activity.</text>
</comment>
<comment type="subunit">
    <text evidence="1">Interacts, and probably forms a ternary complex, with MukE and MukB via its C-terminal region. The complex formation is stimulated by calcium or magnesium. It is required for an interaction between MukE and MukB.</text>
</comment>
<comment type="subcellular location">
    <subcellularLocation>
        <location evidence="1">Cytoplasm</location>
        <location evidence="1">Nucleoid</location>
    </subcellularLocation>
    <text evidence="1">Restricted to the nucleoid region.</text>
</comment>
<comment type="similarity">
    <text evidence="1">Belongs to the MukF family.</text>
</comment>
<organism>
    <name type="scientific">Yersinia pestis</name>
    <dbReference type="NCBI Taxonomy" id="632"/>
    <lineage>
        <taxon>Bacteria</taxon>
        <taxon>Pseudomonadati</taxon>
        <taxon>Pseudomonadota</taxon>
        <taxon>Gammaproteobacteria</taxon>
        <taxon>Enterobacterales</taxon>
        <taxon>Yersiniaceae</taxon>
        <taxon>Yersinia</taxon>
    </lineage>
</organism>
<reference key="1">
    <citation type="journal article" date="2001" name="Nature">
        <title>Genome sequence of Yersinia pestis, the causative agent of plague.</title>
        <authorList>
            <person name="Parkhill J."/>
            <person name="Wren B.W."/>
            <person name="Thomson N.R."/>
            <person name="Titball R.W."/>
            <person name="Holden M.T.G."/>
            <person name="Prentice M.B."/>
            <person name="Sebaihia M."/>
            <person name="James K.D."/>
            <person name="Churcher C.M."/>
            <person name="Mungall K.L."/>
            <person name="Baker S."/>
            <person name="Basham D."/>
            <person name="Bentley S.D."/>
            <person name="Brooks K."/>
            <person name="Cerdeno-Tarraga A.-M."/>
            <person name="Chillingworth T."/>
            <person name="Cronin A."/>
            <person name="Davies R.M."/>
            <person name="Davis P."/>
            <person name="Dougan G."/>
            <person name="Feltwell T."/>
            <person name="Hamlin N."/>
            <person name="Holroyd S."/>
            <person name="Jagels K."/>
            <person name="Karlyshev A.V."/>
            <person name="Leather S."/>
            <person name="Moule S."/>
            <person name="Oyston P.C.F."/>
            <person name="Quail M.A."/>
            <person name="Rutherford K.M."/>
            <person name="Simmonds M."/>
            <person name="Skelton J."/>
            <person name="Stevens K."/>
            <person name="Whitehead S."/>
            <person name="Barrell B.G."/>
        </authorList>
    </citation>
    <scope>NUCLEOTIDE SEQUENCE [LARGE SCALE GENOMIC DNA]</scope>
    <source>
        <strain>CO-92 / Biovar Orientalis</strain>
    </source>
</reference>
<reference key="2">
    <citation type="journal article" date="2002" name="J. Bacteriol.">
        <title>Genome sequence of Yersinia pestis KIM.</title>
        <authorList>
            <person name="Deng W."/>
            <person name="Burland V."/>
            <person name="Plunkett G. III"/>
            <person name="Boutin A."/>
            <person name="Mayhew G.F."/>
            <person name="Liss P."/>
            <person name="Perna N.T."/>
            <person name="Rose D.J."/>
            <person name="Mau B."/>
            <person name="Zhou S."/>
            <person name="Schwartz D.C."/>
            <person name="Fetherston J.D."/>
            <person name="Lindler L.E."/>
            <person name="Brubaker R.R."/>
            <person name="Plano G.V."/>
            <person name="Straley S.C."/>
            <person name="McDonough K.A."/>
            <person name="Nilles M.L."/>
            <person name="Matson J.S."/>
            <person name="Blattner F.R."/>
            <person name="Perry R.D."/>
        </authorList>
    </citation>
    <scope>NUCLEOTIDE SEQUENCE [LARGE SCALE GENOMIC DNA]</scope>
    <source>
        <strain>KIM10+ / Biovar Mediaevalis</strain>
    </source>
</reference>
<reference key="3">
    <citation type="journal article" date="2004" name="DNA Res.">
        <title>Complete genome sequence of Yersinia pestis strain 91001, an isolate avirulent to humans.</title>
        <authorList>
            <person name="Song Y."/>
            <person name="Tong Z."/>
            <person name="Wang J."/>
            <person name="Wang L."/>
            <person name="Guo Z."/>
            <person name="Han Y."/>
            <person name="Zhang J."/>
            <person name="Pei D."/>
            <person name="Zhou D."/>
            <person name="Qin H."/>
            <person name="Pang X."/>
            <person name="Han Y."/>
            <person name="Zhai J."/>
            <person name="Li M."/>
            <person name="Cui B."/>
            <person name="Qi Z."/>
            <person name="Jin L."/>
            <person name="Dai R."/>
            <person name="Chen F."/>
            <person name="Li S."/>
            <person name="Ye C."/>
            <person name="Du Z."/>
            <person name="Lin W."/>
            <person name="Wang J."/>
            <person name="Yu J."/>
            <person name="Yang H."/>
            <person name="Wang J."/>
            <person name="Huang P."/>
            <person name="Yang R."/>
        </authorList>
    </citation>
    <scope>NUCLEOTIDE SEQUENCE [LARGE SCALE GENOMIC DNA]</scope>
    <source>
        <strain>91001 / Biovar Mediaevalis</strain>
    </source>
</reference>
<accession>Q8ZGA1</accession>
<accession>Q0WH12</accession>
<protein>
    <recommendedName>
        <fullName evidence="1">Chromosome partition protein MukF</fullName>
    </recommendedName>
</protein>
<feature type="chain" id="PRO_0000211616" description="Chromosome partition protein MukF">
    <location>
        <begin position="1"/>
        <end position="440"/>
    </location>
</feature>
<feature type="region of interest" description="Leucine-zipper">
    <location>
        <begin position="208"/>
        <end position="236"/>
    </location>
</feature>
<gene>
    <name evidence="1" type="primary">mukF</name>
    <name type="ordered locus">YPO1403</name>
    <name type="ordered locus">y2767</name>
    <name type="ordered locus">YP_1190</name>
</gene>
<evidence type="ECO:0000255" key="1">
    <source>
        <dbReference type="HAMAP-Rule" id="MF_01803"/>
    </source>
</evidence>
<proteinExistence type="inferred from homology"/>
<name>MUKF_YERPE</name>
<sequence length="440" mass="50231">MSEFSQTVPELVAWARKNDFSITLPTERLAFLMAIAALNGERLDGEMSEGELVDAFRHVSKGFEQTTETVTVRANNAINDMVRQRLLNRFTSELADGNAIYRLTPLGIGITDYYIRQREFSTLRLSMQLSIVAQELQRAAEAAEEGGDEFHWHRNVFAPLKYSVAEIFDSIDMTQRLMDEQQHSVKEDIAALLNQDWRAAIASCEMLLSETSGTLRELQDTLEAAGDKLQANLLRIQEATIGNAGLDLVDKLVFDLQSKLDRIISWGQQAIDLWIGYDRHVHKFIRTAIDMDKNRVFAQRLRQSVQHYFDNPWTLTHANADRLLDMRDEELALRSEEVTGELPPDLEFEEFNAIREQLTAMIEQALLVYQQQQIPLNLGEVMRDYLAQYPRARHFDVARILVDQAVRLGVAEADFSGLPAEWLAINDYGAKVQAHVINKY</sequence>